<reference key="1">
    <citation type="submission" date="2008-04" db="EMBL/GenBank/DDBJ databases">
        <title>Complete sequence of Yersinia pseudotuberculosis PB1/+.</title>
        <authorList>
            <person name="Copeland A."/>
            <person name="Lucas S."/>
            <person name="Lapidus A."/>
            <person name="Glavina del Rio T."/>
            <person name="Dalin E."/>
            <person name="Tice H."/>
            <person name="Bruce D."/>
            <person name="Goodwin L."/>
            <person name="Pitluck S."/>
            <person name="Munk A.C."/>
            <person name="Brettin T."/>
            <person name="Detter J.C."/>
            <person name="Han C."/>
            <person name="Tapia R."/>
            <person name="Schmutz J."/>
            <person name="Larimer F."/>
            <person name="Land M."/>
            <person name="Hauser L."/>
            <person name="Challacombe J.F."/>
            <person name="Green L."/>
            <person name="Lindler L.E."/>
            <person name="Nikolich M.P."/>
            <person name="Richardson P."/>
        </authorList>
    </citation>
    <scope>NUCLEOTIDE SEQUENCE [LARGE SCALE GENOMIC DNA]</scope>
    <source>
        <strain>PB1/+</strain>
    </source>
</reference>
<dbReference type="EC" id="1.14.-.-" evidence="1"/>
<dbReference type="EMBL" id="CP001048">
    <property type="protein sequence ID" value="ACC89539.1"/>
    <property type="molecule type" value="Genomic_DNA"/>
</dbReference>
<dbReference type="RefSeq" id="WP_002211854.1">
    <property type="nucleotide sequence ID" value="NZ_CP009780.1"/>
</dbReference>
<dbReference type="SMR" id="B2K776"/>
<dbReference type="KEGG" id="ypb:YPTS_2579"/>
<dbReference type="PATRIC" id="fig|502801.10.peg.1989"/>
<dbReference type="GO" id="GO:0016705">
    <property type="term" value="F:oxidoreductase activity, acting on paired donors, with incorporation or reduction of molecular oxygen"/>
    <property type="evidence" value="ECO:0007669"/>
    <property type="project" value="UniProtKB-UniRule"/>
</dbReference>
<dbReference type="GO" id="GO:0006400">
    <property type="term" value="P:tRNA modification"/>
    <property type="evidence" value="ECO:0007669"/>
    <property type="project" value="UniProtKB-UniRule"/>
</dbReference>
<dbReference type="CDD" id="cd01518">
    <property type="entry name" value="RHOD_YceA"/>
    <property type="match status" value="1"/>
</dbReference>
<dbReference type="Gene3D" id="3.30.70.100">
    <property type="match status" value="1"/>
</dbReference>
<dbReference type="Gene3D" id="3.40.250.10">
    <property type="entry name" value="Rhodanese-like domain"/>
    <property type="match status" value="1"/>
</dbReference>
<dbReference type="HAMAP" id="MF_00469">
    <property type="entry name" value="TrhO"/>
    <property type="match status" value="1"/>
</dbReference>
<dbReference type="InterPro" id="IPR001763">
    <property type="entry name" value="Rhodanese-like_dom"/>
</dbReference>
<dbReference type="InterPro" id="IPR036873">
    <property type="entry name" value="Rhodanese-like_dom_sf"/>
</dbReference>
<dbReference type="InterPro" id="IPR022111">
    <property type="entry name" value="Rhodanese_C"/>
</dbReference>
<dbReference type="InterPro" id="IPR020936">
    <property type="entry name" value="TrhO"/>
</dbReference>
<dbReference type="InterPro" id="IPR040503">
    <property type="entry name" value="TRHO_N"/>
</dbReference>
<dbReference type="NCBIfam" id="NF001133">
    <property type="entry name" value="PRK00142.1-1"/>
    <property type="match status" value="1"/>
</dbReference>
<dbReference type="PANTHER" id="PTHR43846:SF1">
    <property type="entry name" value="TRNA URIDINE(34) HYDROXYLASE"/>
    <property type="match status" value="1"/>
</dbReference>
<dbReference type="PANTHER" id="PTHR43846">
    <property type="entry name" value="UPF0176 PROTEIN YCEA"/>
    <property type="match status" value="1"/>
</dbReference>
<dbReference type="Pfam" id="PF00581">
    <property type="entry name" value="Rhodanese"/>
    <property type="match status" value="1"/>
</dbReference>
<dbReference type="Pfam" id="PF12368">
    <property type="entry name" value="Rhodanese_C"/>
    <property type="match status" value="1"/>
</dbReference>
<dbReference type="Pfam" id="PF17773">
    <property type="entry name" value="UPF0176_N"/>
    <property type="match status" value="1"/>
</dbReference>
<dbReference type="SMART" id="SM00450">
    <property type="entry name" value="RHOD"/>
    <property type="match status" value="1"/>
</dbReference>
<dbReference type="SUPFAM" id="SSF52821">
    <property type="entry name" value="Rhodanese/Cell cycle control phosphatase"/>
    <property type="match status" value="1"/>
</dbReference>
<dbReference type="PROSITE" id="PS50206">
    <property type="entry name" value="RHODANESE_3"/>
    <property type="match status" value="1"/>
</dbReference>
<feature type="chain" id="PRO_1000200390" description="tRNA uridine(34) hydroxylase">
    <location>
        <begin position="1"/>
        <end position="355"/>
    </location>
</feature>
<feature type="domain" description="Rhodanese" evidence="1">
    <location>
        <begin position="146"/>
        <end position="240"/>
    </location>
</feature>
<feature type="region of interest" description="Disordered" evidence="2">
    <location>
        <begin position="333"/>
        <end position="355"/>
    </location>
</feature>
<feature type="active site" description="Cysteine persulfide intermediate" evidence="1">
    <location>
        <position position="200"/>
    </location>
</feature>
<comment type="function">
    <text evidence="1">Catalyzes oxygen-dependent 5-hydroxyuridine (ho5U) modification at position 34 in tRNAs.</text>
</comment>
<comment type="catalytic activity">
    <reaction evidence="1">
        <text>uridine(34) in tRNA + AH2 + O2 = 5-hydroxyuridine(34) in tRNA + A + H2O</text>
        <dbReference type="Rhea" id="RHEA:64224"/>
        <dbReference type="Rhea" id="RHEA-COMP:11727"/>
        <dbReference type="Rhea" id="RHEA-COMP:13381"/>
        <dbReference type="ChEBI" id="CHEBI:13193"/>
        <dbReference type="ChEBI" id="CHEBI:15377"/>
        <dbReference type="ChEBI" id="CHEBI:15379"/>
        <dbReference type="ChEBI" id="CHEBI:17499"/>
        <dbReference type="ChEBI" id="CHEBI:65315"/>
        <dbReference type="ChEBI" id="CHEBI:136877"/>
    </reaction>
</comment>
<comment type="similarity">
    <text evidence="1">Belongs to the TrhO family.</text>
</comment>
<sequence>MPVLHNRISNEELKARMLAETEPRTTVSFYKYFTLEDAKTFRDNLYSQFVKLGVFGRVYVAKEGINAQISVPANRYDEFKIALFASHPALDQVRLNVAHEDDGKSFWVLRLKVRERIVADGIDDDSFDPANIGHYLKADQVNQMIDDPDTLFVDMRNHYEYEVGHFENAIEVPSDTFREQLPMAVDMLQHDKEKNIVMYCTGGIRCEKASAYMLHNGFKNVYHVEGGIIEYARKAKEQGLPLKFIGKNFVFDERMGERISDDVIAHCHQCGTPCDAHTNCKNDGCHLLFIQCPVCAAKFEGCCSQICQEELKLPQEEQRSRRAGRENGIKIFNKSKGLLQATMHIPSPEKSADEK</sequence>
<organism>
    <name type="scientific">Yersinia pseudotuberculosis serotype IB (strain PB1/+)</name>
    <dbReference type="NCBI Taxonomy" id="502801"/>
    <lineage>
        <taxon>Bacteria</taxon>
        <taxon>Pseudomonadati</taxon>
        <taxon>Pseudomonadota</taxon>
        <taxon>Gammaproteobacteria</taxon>
        <taxon>Enterobacterales</taxon>
        <taxon>Yersiniaceae</taxon>
        <taxon>Yersinia</taxon>
    </lineage>
</organism>
<evidence type="ECO:0000255" key="1">
    <source>
        <dbReference type="HAMAP-Rule" id="MF_00469"/>
    </source>
</evidence>
<evidence type="ECO:0000256" key="2">
    <source>
        <dbReference type="SAM" id="MobiDB-lite"/>
    </source>
</evidence>
<protein>
    <recommendedName>
        <fullName evidence="1">tRNA uridine(34) hydroxylase</fullName>
        <ecNumber evidence="1">1.14.-.-</ecNumber>
    </recommendedName>
    <alternativeName>
        <fullName evidence="1">tRNA hydroxylation protein O</fullName>
    </alternativeName>
</protein>
<accession>B2K776</accession>
<name>TRHO_YERPB</name>
<proteinExistence type="inferred from homology"/>
<keyword id="KW-0560">Oxidoreductase</keyword>
<keyword id="KW-0819">tRNA processing</keyword>
<gene>
    <name evidence="1" type="primary">trhO</name>
    <name type="ordered locus">YPTS_2579</name>
</gene>